<feature type="chain" id="PRO_0000193030" description="4-coumarate--CoA ligase 4">
    <location>
        <begin position="1"/>
        <end position="570"/>
    </location>
</feature>
<feature type="region of interest" description="SBD1" evidence="2">
    <location>
        <begin position="291"/>
        <end position="360"/>
    </location>
</feature>
<feature type="region of interest" description="SBD2" evidence="2">
    <location>
        <begin position="361"/>
        <end position="427"/>
    </location>
</feature>
<feature type="binding site" evidence="1">
    <location>
        <position position="218"/>
    </location>
    <ligand>
        <name>ATP</name>
        <dbReference type="ChEBI" id="CHEBI:30616"/>
    </ligand>
</feature>
<feature type="binding site" evidence="1">
    <location>
        <position position="219"/>
    </location>
    <ligand>
        <name>ATP</name>
        <dbReference type="ChEBI" id="CHEBI:30616"/>
    </ligand>
</feature>
<feature type="binding site" evidence="1">
    <location>
        <position position="220"/>
    </location>
    <ligand>
        <name>ATP</name>
        <dbReference type="ChEBI" id="CHEBI:30616"/>
    </ligand>
</feature>
<feature type="binding site" evidence="1">
    <location>
        <position position="221"/>
    </location>
    <ligand>
        <name>ATP</name>
        <dbReference type="ChEBI" id="CHEBI:30616"/>
    </ligand>
</feature>
<feature type="binding site" evidence="1">
    <location>
        <position position="222"/>
    </location>
    <ligand>
        <name>ATP</name>
        <dbReference type="ChEBI" id="CHEBI:30616"/>
    </ligand>
</feature>
<feature type="binding site" evidence="1">
    <location>
        <position position="226"/>
    </location>
    <ligand>
        <name>ATP</name>
        <dbReference type="ChEBI" id="CHEBI:30616"/>
    </ligand>
</feature>
<feature type="binding site" evidence="1">
    <location>
        <position position="268"/>
    </location>
    <ligand>
        <name>(E)-4-coumaroyl-AMP</name>
        <dbReference type="ChEBI" id="CHEBI:192348"/>
    </ligand>
</feature>
<feature type="binding site" evidence="1">
    <location>
        <position position="289"/>
    </location>
    <ligand>
        <name>CoA</name>
        <dbReference type="ChEBI" id="CHEBI:57287"/>
    </ligand>
</feature>
<feature type="binding site" evidence="1">
    <location>
        <position position="338"/>
    </location>
    <ligand>
        <name>(E)-4-coumaroyl-AMP</name>
        <dbReference type="ChEBI" id="CHEBI:192348"/>
    </ligand>
</feature>
<feature type="binding site" evidence="1">
    <location>
        <position position="360"/>
    </location>
    <ligand>
        <name>(E)-4-coumaroyl-AMP</name>
        <dbReference type="ChEBI" id="CHEBI:192348"/>
    </ligand>
</feature>
<feature type="binding site" evidence="1">
    <location>
        <position position="360"/>
    </location>
    <ligand>
        <name>ATP</name>
        <dbReference type="ChEBI" id="CHEBI:30616"/>
    </ligand>
</feature>
<feature type="binding site" evidence="1">
    <location>
        <position position="361"/>
    </location>
    <ligand>
        <name>(E)-4-coumaroyl-AMP</name>
        <dbReference type="ChEBI" id="CHEBI:192348"/>
    </ligand>
</feature>
<feature type="binding site" evidence="1">
    <location>
        <position position="361"/>
    </location>
    <ligand>
        <name>ATP</name>
        <dbReference type="ChEBI" id="CHEBI:30616"/>
    </ligand>
</feature>
<feature type="binding site" evidence="1">
    <location>
        <position position="365"/>
    </location>
    <ligand>
        <name>(E)-4-coumaroyl-AMP</name>
        <dbReference type="ChEBI" id="CHEBI:192348"/>
    </ligand>
</feature>
<feature type="binding site" evidence="1">
    <location>
        <position position="365"/>
    </location>
    <ligand>
        <name>ATP</name>
        <dbReference type="ChEBI" id="CHEBI:30616"/>
    </ligand>
</feature>
<feature type="binding site" evidence="1">
    <location>
        <position position="448"/>
    </location>
    <ligand>
        <name>ATP</name>
        <dbReference type="ChEBI" id="CHEBI:30616"/>
    </ligand>
</feature>
<feature type="binding site" evidence="1">
    <location>
        <position position="463"/>
    </location>
    <ligand>
        <name>ATP</name>
        <dbReference type="ChEBI" id="CHEBI:30616"/>
    </ligand>
</feature>
<feature type="binding site" evidence="1">
    <location>
        <position position="465"/>
    </location>
    <ligand>
        <name>(E)-4-coumaroyl-AMP</name>
        <dbReference type="ChEBI" id="CHEBI:192348"/>
    </ligand>
</feature>
<feature type="binding site" evidence="1">
    <location>
        <position position="469"/>
    </location>
    <ligand>
        <name>(E)-4-coumaroyl-AMP</name>
        <dbReference type="ChEBI" id="CHEBI:192348"/>
    </ligand>
</feature>
<feature type="binding site" evidence="1">
    <location>
        <position position="471"/>
    </location>
    <ligand>
        <name>CoA</name>
        <dbReference type="ChEBI" id="CHEBI:57287"/>
    </ligand>
</feature>
<feature type="binding site" evidence="1">
    <location>
        <position position="472"/>
    </location>
    <ligand>
        <name>CoA</name>
        <dbReference type="ChEBI" id="CHEBI:57287"/>
    </ligand>
</feature>
<feature type="binding site" evidence="1">
    <location>
        <position position="554"/>
    </location>
    <ligand>
        <name>ATP</name>
        <dbReference type="ChEBI" id="CHEBI:30616"/>
    </ligand>
</feature>
<feature type="sequence conflict" description="In Ref. 1; AAP03020." evidence="6" ref="1">
    <original>T</original>
    <variation>I</variation>
    <location>
        <position position="81"/>
    </location>
</feature>
<feature type="sequence conflict" description="In Ref. 1; AAP03020." evidence="6" ref="1">
    <original>A</original>
    <variation>T</variation>
    <location>
        <position position="88"/>
    </location>
</feature>
<proteinExistence type="evidence at protein level"/>
<keyword id="KW-0067">ATP-binding</keyword>
<keyword id="KW-0436">Ligase</keyword>
<keyword id="KW-0460">Magnesium</keyword>
<keyword id="KW-0547">Nucleotide-binding</keyword>
<keyword id="KW-0587">Phenylpropanoid metabolism</keyword>
<keyword id="KW-1185">Reference proteome</keyword>
<name>4CL4_ARATH</name>
<gene>
    <name evidence="5" type="primary">4CL4</name>
    <name evidence="8" type="ordered locus">At3g21230</name>
    <name evidence="9" type="ORF">MXL8_9</name>
</gene>
<accession>Q9LU36</accession>
<accession>Q84P22</accession>
<accession>Q8LPN8</accession>
<protein>
    <recommendedName>
        <fullName evidence="5">4-coumarate--CoA ligase 4</fullName>
        <shortName evidence="5">4CL 4</shortName>
        <ecNumber evidence="3">6.2.1.12</ecNumber>
    </recommendedName>
    <alternativeName>
        <fullName evidence="6">(E)-ferulate--CoA ligase</fullName>
        <ecNumber evidence="3">6.2.1.34</ecNumber>
    </alternativeName>
    <alternativeName>
        <fullName evidence="5">4-coumarate--CoA ligase isoform 5</fullName>
        <shortName evidence="5">At4CL5</shortName>
    </alternativeName>
    <alternativeName>
        <fullName evidence="5">4-coumaroyl-CoA synthase 4</fullName>
    </alternativeName>
    <alternativeName>
        <fullName evidence="6">Sinapate--CoA ligase</fullName>
        <ecNumber evidence="3">6.2.1.-</ecNumber>
    </alternativeName>
</protein>
<evidence type="ECO:0000250" key="1">
    <source>
        <dbReference type="UniProtKB" id="O24146"/>
    </source>
</evidence>
<evidence type="ECO:0000250" key="2">
    <source>
        <dbReference type="UniProtKB" id="Q42524"/>
    </source>
</evidence>
<evidence type="ECO:0000269" key="3">
    <source>
    </source>
</evidence>
<evidence type="ECO:0000269" key="4">
    <source>
    </source>
</evidence>
<evidence type="ECO:0000303" key="5">
    <source>
    </source>
</evidence>
<evidence type="ECO:0000305" key="6"/>
<evidence type="ECO:0000305" key="7">
    <source>
    </source>
</evidence>
<evidence type="ECO:0000312" key="8">
    <source>
        <dbReference type="Araport" id="AT3G21230"/>
    </source>
</evidence>
<evidence type="ECO:0000312" key="9">
    <source>
        <dbReference type="EMBL" id="BAB01715.1"/>
    </source>
</evidence>
<organism>
    <name type="scientific">Arabidopsis thaliana</name>
    <name type="common">Mouse-ear cress</name>
    <dbReference type="NCBI Taxonomy" id="3702"/>
    <lineage>
        <taxon>Eukaryota</taxon>
        <taxon>Viridiplantae</taxon>
        <taxon>Streptophyta</taxon>
        <taxon>Embryophyta</taxon>
        <taxon>Tracheophyta</taxon>
        <taxon>Spermatophyta</taxon>
        <taxon>Magnoliopsida</taxon>
        <taxon>eudicotyledons</taxon>
        <taxon>Gunneridae</taxon>
        <taxon>Pentapetalae</taxon>
        <taxon>rosids</taxon>
        <taxon>malvids</taxon>
        <taxon>Brassicales</taxon>
        <taxon>Brassicaceae</taxon>
        <taxon>Camelineae</taxon>
        <taxon>Arabidopsis</taxon>
    </lineage>
</organism>
<reference key="1">
    <citation type="journal article" date="2003" name="Plant Physiol.">
        <title>Arabidopsis contains a large superfamily of acyl-activating enzymes. Phylogenetic and biochemical analysis reveals a new class of acyl-coenzyme a synthetases.</title>
        <authorList>
            <person name="Shockey J.M."/>
            <person name="Fulda M.S."/>
            <person name="Browse J."/>
        </authorList>
    </citation>
    <scope>NUCLEOTIDE SEQUENCE [MRNA]</scope>
    <scope>GENE FAMILY ORGANIZATION</scope>
    <source>
        <strain>cv. Wassilewskija</strain>
    </source>
</reference>
<reference key="2">
    <citation type="submission" date="2003-08" db="EMBL/GenBank/DDBJ databases">
        <title>Functional classification of Arabidopsis thaliana 4-coumarate CoA ligase genes.</title>
        <authorList>
            <person name="Lawrence P.K."/>
        </authorList>
    </citation>
    <scope>NUCLEOTIDE SEQUENCE [MRNA]</scope>
</reference>
<reference key="3">
    <citation type="journal article" date="2000" name="DNA Res.">
        <title>Structural analysis of Arabidopsis thaliana chromosome 3. I. Sequence features of the regions of 4,504,864 bp covered by sixty P1 and TAC clones.</title>
        <authorList>
            <person name="Sato S."/>
            <person name="Nakamura Y."/>
            <person name="Kaneko T."/>
            <person name="Katoh T."/>
            <person name="Asamizu E."/>
            <person name="Tabata S."/>
        </authorList>
    </citation>
    <scope>NUCLEOTIDE SEQUENCE [LARGE SCALE GENOMIC DNA]</scope>
    <source>
        <strain>cv. Columbia</strain>
    </source>
</reference>
<reference key="4">
    <citation type="journal article" date="2017" name="Plant J.">
        <title>Araport11: a complete reannotation of the Arabidopsis thaliana reference genome.</title>
        <authorList>
            <person name="Cheng C.Y."/>
            <person name="Krishnakumar V."/>
            <person name="Chan A.P."/>
            <person name="Thibaud-Nissen F."/>
            <person name="Schobel S."/>
            <person name="Town C.D."/>
        </authorList>
    </citation>
    <scope>GENOME REANNOTATION</scope>
    <source>
        <strain>cv. Columbia</strain>
    </source>
</reference>
<reference key="5">
    <citation type="journal article" date="2003" name="Science">
        <title>Empirical analysis of transcriptional activity in the Arabidopsis genome.</title>
        <authorList>
            <person name="Yamada K."/>
            <person name="Lim J."/>
            <person name="Dale J.M."/>
            <person name="Chen H."/>
            <person name="Shinn P."/>
            <person name="Palm C.J."/>
            <person name="Southwick A.M."/>
            <person name="Wu H.C."/>
            <person name="Kim C.J."/>
            <person name="Nguyen M."/>
            <person name="Pham P.K."/>
            <person name="Cheuk R.F."/>
            <person name="Karlin-Newmann G."/>
            <person name="Liu S.X."/>
            <person name="Lam B."/>
            <person name="Sakano H."/>
            <person name="Wu T."/>
            <person name="Yu G."/>
            <person name="Miranda M."/>
            <person name="Quach H.L."/>
            <person name="Tripp M."/>
            <person name="Chang C.H."/>
            <person name="Lee J.M."/>
            <person name="Toriumi M.J."/>
            <person name="Chan M.M."/>
            <person name="Tang C.C."/>
            <person name="Onodera C.S."/>
            <person name="Deng J.M."/>
            <person name="Akiyama K."/>
            <person name="Ansari Y."/>
            <person name="Arakawa T."/>
            <person name="Banh J."/>
            <person name="Banno F."/>
            <person name="Bowser L."/>
            <person name="Brooks S.Y."/>
            <person name="Carninci P."/>
            <person name="Chao Q."/>
            <person name="Choy N."/>
            <person name="Enju A."/>
            <person name="Goldsmith A.D."/>
            <person name="Gurjal M."/>
            <person name="Hansen N.F."/>
            <person name="Hayashizaki Y."/>
            <person name="Johnson-Hopson C."/>
            <person name="Hsuan V.W."/>
            <person name="Iida K."/>
            <person name="Karnes M."/>
            <person name="Khan S."/>
            <person name="Koesema E."/>
            <person name="Ishida J."/>
            <person name="Jiang P.X."/>
            <person name="Jones T."/>
            <person name="Kawai J."/>
            <person name="Kamiya A."/>
            <person name="Meyers C."/>
            <person name="Nakajima M."/>
            <person name="Narusaka M."/>
            <person name="Seki M."/>
            <person name="Sakurai T."/>
            <person name="Satou M."/>
            <person name="Tamse R."/>
            <person name="Vaysberg M."/>
            <person name="Wallender E.K."/>
            <person name="Wong C."/>
            <person name="Yamamura Y."/>
            <person name="Yuan S."/>
            <person name="Shinozaki K."/>
            <person name="Davis R.W."/>
            <person name="Theologis A."/>
            <person name="Ecker J.R."/>
        </authorList>
    </citation>
    <scope>NUCLEOTIDE SEQUENCE [LARGE SCALE MRNA] OF 26-570</scope>
    <source>
        <strain>cv. Columbia</strain>
    </source>
</reference>
<reference key="6">
    <citation type="journal article" date="2004" name="Proc. Natl. Acad. Sci. U.S.A.">
        <title>The 4-coumarate:CoA ligase gene family in Arabidopsis thaliana comprises one rare, sinapate-activating and three commonly occurring isoenzymes.</title>
        <authorList>
            <person name="Hamberger B."/>
            <person name="Hahlbrock K."/>
        </authorList>
    </citation>
    <scope>FUNCTION</scope>
    <scope>CATALYTIC ACTIVITY</scope>
    <scope>BIOPHYSICOCHEMICAL PROPERTIES</scope>
    <scope>PATHWAY</scope>
</reference>
<reference key="7">
    <citation type="journal article" date="2003" name="Proc. Natl. Acad. Sci. U.S.A.">
        <title>The substrate specificity-determining amino acid code of 4-coumarate:CoA ligase.</title>
        <authorList>
            <person name="Schneider K."/>
            <person name="Hoevel K."/>
            <person name="Witzel K."/>
            <person name="Hamberger B."/>
            <person name="Schomburg D."/>
            <person name="Kombrink E."/>
            <person name="Stuible H.-P."/>
        </authorList>
    </citation>
    <scope>GENE FAMILY ORGANIZATION</scope>
</reference>
<reference key="8">
    <citation type="journal article" date="2006" name="Planta">
        <title>Multiple cis-regulatory elements regulate distinct and complex patterns of developmental and wound-induced expression of Arabidopsis thaliana 4CL gene family members.</title>
        <authorList>
            <person name="Soltani B.M."/>
            <person name="Ehlting J."/>
            <person name="Hamberger B."/>
            <person name="Douglas C.J."/>
        </authorList>
    </citation>
    <scope>INDUCTION BY WOUNDING</scope>
</reference>
<sequence length="570" mass="62559">MVLQQQTHFLTKKIDQEDEEEEPSHDFIFRSKLPDIFIPNHLPLTDYVFQRFSGDGDGDSSTTCIIDGATGRILTYADVQTNMRRIAAGIHRLGIRHGDVVMLLLPNSPEFALSFLAVAYLGAVSTTANPFYTQPEIAKQAKASAAKMIITKKCLVDKLTNLKNDGVLIVCLDDDGDNGVVSSSDDGCVSFTELTQADETELLKPKISPEDTVAMPYSSGTTGLPKGVMITHKGLVTSIAQKVDGENPNLNFTANDVILCFLPMFHIYALDALMLSAMRTGAALLIVPRFELNLVMELIQRYKVTVVPVAPPVVLAFIKSPETERYDLSSVRIMLSGAATLKKELEDAVRLKFPNAIFGQGYGMTESGTVAKSLAFAKNPFKTKSGACGTVIRNAEMKVVDTETGISLPRNKSGEICVRGHQLMKGYLNDPEATARTIDKDGWLHTGDIGFVDDDDEIFIVDRLKELIKFKGYQVAPAELEALLISHPSIDDAAVVAMKDEVADEVPVAFVARSQGSQLTEDDVKSYVNKQVVHYKRIKMVFFIEVIPKAVSGKILRKDLRAKLETMCSK</sequence>
<comment type="function">
    <text evidence="1 3">Produces CoA thioesters of a variety of hydroxy- and methoxy-substituted cinnamic acids, which are used to synthesize several phenylpropanoid-derived compounds, including anthocyanins, flavonoids, isoflavonoids, coumarins, lignin, suberin and wall-bound phenolics (PubMed:14769935). Follows a two-step reaction mechanism, wherein the carboxylate substrate first undergoes adenylation by ATP, followed by a thioesterification in the presence of CoA to yield the final CoA thioesters (By similarity).</text>
</comment>
<comment type="catalytic activity">
    <reaction evidence="3">
        <text>(E)-sinapate + ATP + CoA = (E)-sinapoyl-CoA + AMP + diphosphate</text>
        <dbReference type="Rhea" id="RHEA:72587"/>
        <dbReference type="ChEBI" id="CHEBI:30023"/>
        <dbReference type="ChEBI" id="CHEBI:30616"/>
        <dbReference type="ChEBI" id="CHEBI:33019"/>
        <dbReference type="ChEBI" id="CHEBI:57287"/>
        <dbReference type="ChEBI" id="CHEBI:57393"/>
        <dbReference type="ChEBI" id="CHEBI:456215"/>
    </reaction>
    <physiologicalReaction direction="left-to-right" evidence="3">
        <dbReference type="Rhea" id="RHEA:72588"/>
    </physiologicalReaction>
</comment>
<comment type="catalytic activity">
    <reaction evidence="3">
        <text>(E)-4-coumarate + ATP + CoA = (E)-4-coumaroyl-CoA + AMP + diphosphate</text>
        <dbReference type="Rhea" id="RHEA:19641"/>
        <dbReference type="ChEBI" id="CHEBI:12876"/>
        <dbReference type="ChEBI" id="CHEBI:30616"/>
        <dbReference type="ChEBI" id="CHEBI:33019"/>
        <dbReference type="ChEBI" id="CHEBI:57287"/>
        <dbReference type="ChEBI" id="CHEBI:85008"/>
        <dbReference type="ChEBI" id="CHEBI:456215"/>
        <dbReference type="EC" id="6.2.1.12"/>
    </reaction>
    <physiologicalReaction direction="left-to-right" evidence="3">
        <dbReference type="Rhea" id="RHEA:19642"/>
    </physiologicalReaction>
</comment>
<comment type="catalytic activity">
    <reaction evidence="3">
        <text>(E)-caffeate + ATP + CoA = (E)-caffeoyl-CoA + AMP + diphosphate</text>
        <dbReference type="Rhea" id="RHEA:36299"/>
        <dbReference type="ChEBI" id="CHEBI:30616"/>
        <dbReference type="ChEBI" id="CHEBI:33019"/>
        <dbReference type="ChEBI" id="CHEBI:57287"/>
        <dbReference type="ChEBI" id="CHEBI:57770"/>
        <dbReference type="ChEBI" id="CHEBI:87136"/>
        <dbReference type="ChEBI" id="CHEBI:456215"/>
    </reaction>
    <physiologicalReaction direction="left-to-right" evidence="3">
        <dbReference type="Rhea" id="RHEA:36300"/>
    </physiologicalReaction>
</comment>
<comment type="catalytic activity">
    <reaction evidence="3">
        <text>(E)-ferulate + ATP + CoA = (E)-feruloyl-CoA + AMP + diphosphate</text>
        <dbReference type="Rhea" id="RHEA:36251"/>
        <dbReference type="ChEBI" id="CHEBI:29749"/>
        <dbReference type="ChEBI" id="CHEBI:30616"/>
        <dbReference type="ChEBI" id="CHEBI:33019"/>
        <dbReference type="ChEBI" id="CHEBI:57287"/>
        <dbReference type="ChEBI" id="CHEBI:87305"/>
        <dbReference type="ChEBI" id="CHEBI:456215"/>
        <dbReference type="EC" id="6.2.1.34"/>
    </reaction>
    <physiologicalReaction direction="left-to-right" evidence="3">
        <dbReference type="Rhea" id="RHEA:36252"/>
    </physiologicalReaction>
</comment>
<comment type="catalytic activity">
    <reaction evidence="7">
        <text>(E)-sinapate + ATP + H(+) = (E)-sinapoyl-AMP + diphosphate</text>
        <dbReference type="Rhea" id="RHEA:72603"/>
        <dbReference type="ChEBI" id="CHEBI:15378"/>
        <dbReference type="ChEBI" id="CHEBI:30023"/>
        <dbReference type="ChEBI" id="CHEBI:30616"/>
        <dbReference type="ChEBI" id="CHEBI:33019"/>
        <dbReference type="ChEBI" id="CHEBI:192469"/>
    </reaction>
    <physiologicalReaction direction="left-to-right" evidence="7">
        <dbReference type="Rhea" id="RHEA:72604"/>
    </physiologicalReaction>
</comment>
<comment type="catalytic activity">
    <reaction evidence="7">
        <text>(E)-sinapoyl-AMP + CoA = (E)-sinapoyl-CoA + AMP + H(+)</text>
        <dbReference type="Rhea" id="RHEA:72607"/>
        <dbReference type="ChEBI" id="CHEBI:15378"/>
        <dbReference type="ChEBI" id="CHEBI:57287"/>
        <dbReference type="ChEBI" id="CHEBI:57393"/>
        <dbReference type="ChEBI" id="CHEBI:192469"/>
        <dbReference type="ChEBI" id="CHEBI:456215"/>
    </reaction>
    <physiologicalReaction direction="left-to-right" evidence="7">
        <dbReference type="Rhea" id="RHEA:72608"/>
    </physiologicalReaction>
</comment>
<comment type="catalytic activity">
    <reaction evidence="7">
        <text>(E)-4-coumarate + ATP + H(+) = (E)-4-coumaroyl-AMP + diphosphate</text>
        <dbReference type="Rhea" id="RHEA:72419"/>
        <dbReference type="ChEBI" id="CHEBI:12876"/>
        <dbReference type="ChEBI" id="CHEBI:15378"/>
        <dbReference type="ChEBI" id="CHEBI:30616"/>
        <dbReference type="ChEBI" id="CHEBI:33019"/>
        <dbReference type="ChEBI" id="CHEBI:192348"/>
    </reaction>
    <physiologicalReaction direction="left-to-right" evidence="7">
        <dbReference type="Rhea" id="RHEA:72420"/>
    </physiologicalReaction>
</comment>
<comment type="catalytic activity">
    <reaction evidence="7">
        <text>(E)-4-coumaroyl-AMP + CoA = (E)-4-coumaroyl-CoA + AMP + H(+)</text>
        <dbReference type="Rhea" id="RHEA:72423"/>
        <dbReference type="ChEBI" id="CHEBI:15378"/>
        <dbReference type="ChEBI" id="CHEBI:57287"/>
        <dbReference type="ChEBI" id="CHEBI:85008"/>
        <dbReference type="ChEBI" id="CHEBI:192348"/>
        <dbReference type="ChEBI" id="CHEBI:456215"/>
    </reaction>
    <physiologicalReaction direction="left-to-right" evidence="7">
        <dbReference type="Rhea" id="RHEA:72424"/>
    </physiologicalReaction>
</comment>
<comment type="catalytic activity">
    <reaction evidence="7">
        <text>(E)-caffeate + ATP + H(+) = (E)-caffeoyl-AMP + diphosphate</text>
        <dbReference type="Rhea" id="RHEA:72431"/>
        <dbReference type="ChEBI" id="CHEBI:15378"/>
        <dbReference type="ChEBI" id="CHEBI:30616"/>
        <dbReference type="ChEBI" id="CHEBI:33019"/>
        <dbReference type="ChEBI" id="CHEBI:57770"/>
        <dbReference type="ChEBI" id="CHEBI:192349"/>
    </reaction>
    <physiologicalReaction direction="left-to-right" evidence="7">
        <dbReference type="Rhea" id="RHEA:72432"/>
    </physiologicalReaction>
</comment>
<comment type="catalytic activity">
    <reaction evidence="7">
        <text>(E)-caffeoyl-AMP + CoA = (E)-caffeoyl-CoA + AMP + H(+)</text>
        <dbReference type="Rhea" id="RHEA:72435"/>
        <dbReference type="ChEBI" id="CHEBI:15378"/>
        <dbReference type="ChEBI" id="CHEBI:57287"/>
        <dbReference type="ChEBI" id="CHEBI:87136"/>
        <dbReference type="ChEBI" id="CHEBI:192349"/>
        <dbReference type="ChEBI" id="CHEBI:456215"/>
    </reaction>
    <physiologicalReaction direction="left-to-right" evidence="7">
        <dbReference type="Rhea" id="RHEA:72436"/>
    </physiologicalReaction>
</comment>
<comment type="catalytic activity">
    <reaction evidence="3">
        <text>(E)-ferulate + ATP + H(+) = (E)-feruloyl-AMP + diphosphate</text>
        <dbReference type="Rhea" id="RHEA:72439"/>
        <dbReference type="ChEBI" id="CHEBI:15378"/>
        <dbReference type="ChEBI" id="CHEBI:29749"/>
        <dbReference type="ChEBI" id="CHEBI:30616"/>
        <dbReference type="ChEBI" id="CHEBI:33019"/>
        <dbReference type="ChEBI" id="CHEBI:192350"/>
    </reaction>
    <physiologicalReaction direction="left-to-right" evidence="3">
        <dbReference type="Rhea" id="RHEA:72440"/>
    </physiologicalReaction>
</comment>
<comment type="catalytic activity">
    <reaction evidence="7">
        <text>(E)-feruloyl-AMP + CoA = (E)-feruloyl-CoA + AMP + H(+)</text>
        <dbReference type="Rhea" id="RHEA:72443"/>
        <dbReference type="ChEBI" id="CHEBI:15378"/>
        <dbReference type="ChEBI" id="CHEBI:57287"/>
        <dbReference type="ChEBI" id="CHEBI:87305"/>
        <dbReference type="ChEBI" id="CHEBI:192350"/>
        <dbReference type="ChEBI" id="CHEBI:456215"/>
    </reaction>
    <physiologicalReaction direction="left-to-right" evidence="7">
        <dbReference type="Rhea" id="RHEA:72444"/>
    </physiologicalReaction>
</comment>
<comment type="cofactor">
    <cofactor evidence="1">
        <name>Mg(2+)</name>
        <dbReference type="ChEBI" id="CHEBI:18420"/>
    </cofactor>
</comment>
<comment type="biophysicochemical properties">
    <kinetics>
        <KM evidence="3">432 uM for 4-coumarate</KM>
        <KM evidence="3">186 uM for caffeate</KM>
        <KM evidence="3">26 uM for ferulate</KM>
        <KM evidence="3">20 uM for sinapate</KM>
        <Vmax evidence="3">100.0 nmol/sec/mg enzyme with 4-coumarate as substrate</Vmax>
        <Vmax evidence="3">187.0 nmol/sec/mg enzyme with caffeate as substrate</Vmax>
        <Vmax evidence="3">153.0 nmol/sec/mg enzyme with ferulate as substrate</Vmax>
        <Vmax evidence="3">105.0 nmol/sec/mg enzyme with sinapate as substrate</Vmax>
    </kinetics>
</comment>
<comment type="pathway">
    <text evidence="3">Phytoalexin biosynthesis; 3,4',5-trihydroxystilbene biosynthesis; 3,4',5-trihydroxystilbene from trans-4-coumarate: step 1/2.</text>
</comment>
<comment type="induction">
    <text evidence="4">By wounding.</text>
</comment>
<comment type="domain">
    <text evidence="2">Both substrate-binding domains (SBD1 and SBD2) are involved in the substrate recognition, and are sufficient to confer the substrate specificity.</text>
</comment>
<comment type="miscellaneous">
    <text>Activates efficiently sinapate, besides the usual 4CL substrates (4-coumarate, caffeate, and ferulate).</text>
</comment>
<comment type="similarity">
    <text evidence="6">Belongs to the ATP-dependent AMP-binding enzyme family.</text>
</comment>
<comment type="sequence caution" evidence="6">
    <conflict type="erroneous initiation">
        <sequence resource="EMBL-CDS" id="AAM19949"/>
    </conflict>
    <text>Truncated N-terminus.</text>
</comment>
<dbReference type="EC" id="6.2.1.12" evidence="3"/>
<dbReference type="EC" id="6.2.1.34" evidence="3"/>
<dbReference type="EC" id="6.2.1.-" evidence="3"/>
<dbReference type="EMBL" id="AY250837">
    <property type="protein sequence ID" value="AAP03020.1"/>
    <property type="molecule type" value="mRNA"/>
</dbReference>
<dbReference type="EMBL" id="AY376732">
    <property type="protein sequence ID" value="AAQ86591.1"/>
    <property type="molecule type" value="mRNA"/>
</dbReference>
<dbReference type="EMBL" id="AB023045">
    <property type="protein sequence ID" value="BAB01715.1"/>
    <property type="molecule type" value="Genomic_DNA"/>
</dbReference>
<dbReference type="EMBL" id="CP002686">
    <property type="protein sequence ID" value="AEE76479.1"/>
    <property type="molecule type" value="Genomic_DNA"/>
</dbReference>
<dbReference type="EMBL" id="AY095992">
    <property type="protein sequence ID" value="AAM19949.1"/>
    <property type="status" value="ALT_INIT"/>
    <property type="molecule type" value="mRNA"/>
</dbReference>
<dbReference type="EMBL" id="BT000614">
    <property type="protein sequence ID" value="AAN18181.1"/>
    <property type="molecule type" value="mRNA"/>
</dbReference>
<dbReference type="SMR" id="Q9LU36"/>
<dbReference type="FunCoup" id="Q9LU36">
    <property type="interactions" value="1799"/>
</dbReference>
<dbReference type="STRING" id="3702.Q9LU36"/>
<dbReference type="iPTMnet" id="Q9LU36"/>
<dbReference type="PaxDb" id="3702-AT3G21230.1"/>
<dbReference type="ProteomicsDB" id="244518"/>
<dbReference type="EnsemblPlants" id="AT3G21230.1">
    <property type="protein sequence ID" value="AT3G21230.1"/>
    <property type="gene ID" value="AT3G21230"/>
</dbReference>
<dbReference type="Gramene" id="AT3G21230.1">
    <property type="protein sequence ID" value="AT3G21230.1"/>
    <property type="gene ID" value="AT3G21230"/>
</dbReference>
<dbReference type="KEGG" id="ath:AT3G21230"/>
<dbReference type="Araport" id="AT3G21230"/>
<dbReference type="TAIR" id="AT3G21230">
    <property type="gene designation" value="4CL5"/>
</dbReference>
<dbReference type="eggNOG" id="KOG1176">
    <property type="taxonomic scope" value="Eukaryota"/>
</dbReference>
<dbReference type="HOGENOM" id="CLU_000022_59_2_1"/>
<dbReference type="InParanoid" id="Q9LU36"/>
<dbReference type="OMA" id="FYNCFGQ"/>
<dbReference type="PhylomeDB" id="Q9LU36"/>
<dbReference type="BRENDA" id="6.2.1.12">
    <property type="organism ID" value="399"/>
</dbReference>
<dbReference type="SABIO-RK" id="Q9LU36"/>
<dbReference type="UniPathway" id="UPA00372">
    <property type="reaction ID" value="UER00547"/>
</dbReference>
<dbReference type="PRO" id="PR:Q9LU36"/>
<dbReference type="Proteomes" id="UP000006548">
    <property type="component" value="Chromosome 3"/>
</dbReference>
<dbReference type="ExpressionAtlas" id="Q9LU36">
    <property type="expression patterns" value="baseline and differential"/>
</dbReference>
<dbReference type="GO" id="GO:0106286">
    <property type="term" value="F:(E)-caffeate-CoA ligase activity"/>
    <property type="evidence" value="ECO:0007669"/>
    <property type="project" value="RHEA"/>
</dbReference>
<dbReference type="GO" id="GO:0016207">
    <property type="term" value="F:4-coumarate-CoA ligase activity"/>
    <property type="evidence" value="ECO:0000314"/>
    <property type="project" value="TAIR"/>
</dbReference>
<dbReference type="GO" id="GO:0005524">
    <property type="term" value="F:ATP binding"/>
    <property type="evidence" value="ECO:0007669"/>
    <property type="project" value="UniProtKB-KW"/>
</dbReference>
<dbReference type="GO" id="GO:0050563">
    <property type="term" value="F:trans-feruloyl-CoA synthase activity"/>
    <property type="evidence" value="ECO:0007669"/>
    <property type="project" value="RHEA"/>
</dbReference>
<dbReference type="GO" id="GO:0009699">
    <property type="term" value="P:phenylpropanoid biosynthetic process"/>
    <property type="evidence" value="ECO:0000314"/>
    <property type="project" value="TAIR"/>
</dbReference>
<dbReference type="CDD" id="cd05904">
    <property type="entry name" value="4CL"/>
    <property type="match status" value="1"/>
</dbReference>
<dbReference type="FunFam" id="3.30.300.30:FF:000007">
    <property type="entry name" value="4-coumarate--CoA ligase 2"/>
    <property type="match status" value="1"/>
</dbReference>
<dbReference type="FunFam" id="3.40.50.12780:FF:000003">
    <property type="entry name" value="Long-chain-fatty-acid--CoA ligase FadD"/>
    <property type="match status" value="1"/>
</dbReference>
<dbReference type="Gene3D" id="3.30.300.30">
    <property type="match status" value="1"/>
</dbReference>
<dbReference type="Gene3D" id="3.40.50.12780">
    <property type="entry name" value="N-terminal domain of ligase-like"/>
    <property type="match status" value="1"/>
</dbReference>
<dbReference type="InterPro" id="IPR025110">
    <property type="entry name" value="AMP-bd_C"/>
</dbReference>
<dbReference type="InterPro" id="IPR045851">
    <property type="entry name" value="AMP-bd_C_sf"/>
</dbReference>
<dbReference type="InterPro" id="IPR020845">
    <property type="entry name" value="AMP-binding_CS"/>
</dbReference>
<dbReference type="InterPro" id="IPR000873">
    <property type="entry name" value="AMP-dep_synth/lig_dom"/>
</dbReference>
<dbReference type="InterPro" id="IPR042099">
    <property type="entry name" value="ANL_N_sf"/>
</dbReference>
<dbReference type="PANTHER" id="PTHR24096:SF359">
    <property type="entry name" value="4-COUMARATE--COA LIGASE 4"/>
    <property type="match status" value="1"/>
</dbReference>
<dbReference type="PANTHER" id="PTHR24096">
    <property type="entry name" value="LONG-CHAIN-FATTY-ACID--COA LIGASE"/>
    <property type="match status" value="1"/>
</dbReference>
<dbReference type="Pfam" id="PF00501">
    <property type="entry name" value="AMP-binding"/>
    <property type="match status" value="1"/>
</dbReference>
<dbReference type="Pfam" id="PF13193">
    <property type="entry name" value="AMP-binding_C"/>
    <property type="match status" value="1"/>
</dbReference>
<dbReference type="SUPFAM" id="SSF56801">
    <property type="entry name" value="Acetyl-CoA synthetase-like"/>
    <property type="match status" value="1"/>
</dbReference>
<dbReference type="PROSITE" id="PS00455">
    <property type="entry name" value="AMP_BINDING"/>
    <property type="match status" value="1"/>
</dbReference>